<feature type="chain" id="PRO_0000373706" description="Uncharacterized protein C62L">
    <location>
        <begin position="1"/>
        <end position="45"/>
    </location>
</feature>
<sequence length="45" mass="5398">MRNTPFVVKINIIFLKVVSNTAVSVFCRDRRIRFNSDWSNSYFQK</sequence>
<reference key="1">
    <citation type="submission" date="2003-03" db="EMBL/GenBank/DDBJ databases">
        <title>African swine fever virus genomes.</title>
        <authorList>
            <person name="Kutish G.F."/>
            <person name="Rock D.L."/>
        </authorList>
    </citation>
    <scope>NUCLEOTIDE SEQUENCE [LARGE SCALE GENOMIC DNA]</scope>
</reference>
<evidence type="ECO:0000305" key="1"/>
<comment type="similarity">
    <text evidence="1">Belongs to the asfivirus C62L family.</text>
</comment>
<accession>P0CAI3</accession>
<protein>
    <recommendedName>
        <fullName>Uncharacterized protein C62L</fullName>
        <shortName>pC62L</shortName>
    </recommendedName>
</protein>
<organismHost>
    <name type="scientific">Ornithodoros</name>
    <name type="common">relapsing fever ticks</name>
    <dbReference type="NCBI Taxonomy" id="6937"/>
</organismHost>
<organismHost>
    <name type="scientific">Phacochoerus aethiopicus</name>
    <name type="common">Warthog</name>
    <dbReference type="NCBI Taxonomy" id="85517"/>
</organismHost>
<organismHost>
    <name type="scientific">Phacochoerus africanus</name>
    <name type="common">Warthog</name>
    <dbReference type="NCBI Taxonomy" id="41426"/>
</organismHost>
<organismHost>
    <name type="scientific">Potamochoerus larvatus</name>
    <name type="common">Bushpig</name>
    <dbReference type="NCBI Taxonomy" id="273792"/>
</organismHost>
<organismHost>
    <name type="scientific">Sus scrofa</name>
    <name type="common">Pig</name>
    <dbReference type="NCBI Taxonomy" id="9823"/>
</organismHost>
<name>VF62_ASFK5</name>
<organism>
    <name type="scientific">African swine fever virus (isolate Pig/Kenya/KEN-50/1950)</name>
    <name type="common">ASFV</name>
    <dbReference type="NCBI Taxonomy" id="561445"/>
    <lineage>
        <taxon>Viruses</taxon>
        <taxon>Varidnaviria</taxon>
        <taxon>Bamfordvirae</taxon>
        <taxon>Nucleocytoviricota</taxon>
        <taxon>Pokkesviricetes</taxon>
        <taxon>Asfuvirales</taxon>
        <taxon>Asfarviridae</taxon>
        <taxon>Asfivirus</taxon>
        <taxon>African swine fever virus</taxon>
    </lineage>
</organism>
<proteinExistence type="inferred from homology"/>
<dbReference type="EMBL" id="AY261360">
    <property type="status" value="NOT_ANNOTATED_CDS"/>
    <property type="molecule type" value="Genomic_DNA"/>
</dbReference>
<dbReference type="Proteomes" id="UP000000861">
    <property type="component" value="Segment"/>
</dbReference>
<gene>
    <name type="ordered locus">Ken-082</name>
</gene>